<protein>
    <recommendedName>
        <fullName>Probable fructose-bisphosphate aldolase class 1</fullName>
        <ecNumber>4.1.2.13</ecNumber>
    </recommendedName>
    <alternativeName>
        <fullName>Fructose-bisphosphate aldolase class I</fullName>
        <shortName>FBP aldolase</shortName>
    </alternativeName>
</protein>
<comment type="catalytic activity">
    <reaction>
        <text>beta-D-fructose 1,6-bisphosphate = D-glyceraldehyde 3-phosphate + dihydroxyacetone phosphate</text>
        <dbReference type="Rhea" id="RHEA:14729"/>
        <dbReference type="ChEBI" id="CHEBI:32966"/>
        <dbReference type="ChEBI" id="CHEBI:57642"/>
        <dbReference type="ChEBI" id="CHEBI:59776"/>
        <dbReference type="EC" id="4.1.2.13"/>
    </reaction>
</comment>
<comment type="pathway">
    <text>Carbohydrate degradation; glycolysis; D-glyceraldehyde 3-phosphate and glycerone phosphate from D-glucose: step 4/4.</text>
</comment>
<comment type="similarity">
    <text evidence="1">Belongs to the class I fructose-bisphosphate aldolase family.</text>
</comment>
<keyword id="KW-0324">Glycolysis</keyword>
<keyword id="KW-0456">Lyase</keyword>
<name>ALF1_XANAC</name>
<dbReference type="EC" id="4.1.2.13"/>
<dbReference type="EMBL" id="AE008923">
    <property type="protein sequence ID" value="AAM38187.1"/>
    <property type="molecule type" value="Genomic_DNA"/>
</dbReference>
<dbReference type="RefSeq" id="WP_003487259.1">
    <property type="nucleotide sequence ID" value="NC_003919.1"/>
</dbReference>
<dbReference type="SMR" id="Q8PHB5"/>
<dbReference type="KEGG" id="xac:XAC3344"/>
<dbReference type="eggNOG" id="COG3588">
    <property type="taxonomic scope" value="Bacteria"/>
</dbReference>
<dbReference type="HOGENOM" id="CLU_031243_0_0_6"/>
<dbReference type="UniPathway" id="UPA00109">
    <property type="reaction ID" value="UER00183"/>
</dbReference>
<dbReference type="Proteomes" id="UP000000576">
    <property type="component" value="Chromosome"/>
</dbReference>
<dbReference type="GO" id="GO:0004332">
    <property type="term" value="F:fructose-bisphosphate aldolase activity"/>
    <property type="evidence" value="ECO:0007669"/>
    <property type="project" value="UniProtKB-EC"/>
</dbReference>
<dbReference type="GO" id="GO:0006096">
    <property type="term" value="P:glycolytic process"/>
    <property type="evidence" value="ECO:0007669"/>
    <property type="project" value="UniProtKB-UniPathway"/>
</dbReference>
<dbReference type="CDD" id="cd00948">
    <property type="entry name" value="FBP_aldolase_I_a"/>
    <property type="match status" value="1"/>
</dbReference>
<dbReference type="FunFam" id="3.20.20.70:FF:000140">
    <property type="entry name" value="Fructose-bisphosphate aldolase"/>
    <property type="match status" value="1"/>
</dbReference>
<dbReference type="Gene3D" id="3.20.20.70">
    <property type="entry name" value="Aldolase class I"/>
    <property type="match status" value="1"/>
</dbReference>
<dbReference type="InterPro" id="IPR029768">
    <property type="entry name" value="Aldolase_I_AS"/>
</dbReference>
<dbReference type="InterPro" id="IPR013785">
    <property type="entry name" value="Aldolase_TIM"/>
</dbReference>
<dbReference type="InterPro" id="IPR000741">
    <property type="entry name" value="FBA_I"/>
</dbReference>
<dbReference type="NCBIfam" id="NF033379">
    <property type="entry name" value="FrucBisAld_I"/>
    <property type="match status" value="1"/>
</dbReference>
<dbReference type="PANTHER" id="PTHR11627">
    <property type="entry name" value="FRUCTOSE-BISPHOSPHATE ALDOLASE"/>
    <property type="match status" value="1"/>
</dbReference>
<dbReference type="Pfam" id="PF00274">
    <property type="entry name" value="Glycolytic"/>
    <property type="match status" value="1"/>
</dbReference>
<dbReference type="SUPFAM" id="SSF51569">
    <property type="entry name" value="Aldolase"/>
    <property type="match status" value="1"/>
</dbReference>
<dbReference type="PROSITE" id="PS00158">
    <property type="entry name" value="ALDOLASE_CLASS_I"/>
    <property type="match status" value="1"/>
</dbReference>
<gene>
    <name type="ordered locus">XAC3344</name>
</gene>
<reference key="1">
    <citation type="journal article" date="2002" name="Nature">
        <title>Comparison of the genomes of two Xanthomonas pathogens with differing host specificities.</title>
        <authorList>
            <person name="da Silva A.C.R."/>
            <person name="Ferro J.A."/>
            <person name="Reinach F.C."/>
            <person name="Farah C.S."/>
            <person name="Furlan L.R."/>
            <person name="Quaggio R.B."/>
            <person name="Monteiro-Vitorello C.B."/>
            <person name="Van Sluys M.A."/>
            <person name="Almeida N.F. Jr."/>
            <person name="Alves L.M.C."/>
            <person name="do Amaral A.M."/>
            <person name="Bertolini M.C."/>
            <person name="Camargo L.E.A."/>
            <person name="Camarotte G."/>
            <person name="Cannavan F."/>
            <person name="Cardozo J."/>
            <person name="Chambergo F."/>
            <person name="Ciapina L.P."/>
            <person name="Cicarelli R.M.B."/>
            <person name="Coutinho L.L."/>
            <person name="Cursino-Santos J.R."/>
            <person name="El-Dorry H."/>
            <person name="Faria J.B."/>
            <person name="Ferreira A.J.S."/>
            <person name="Ferreira R.C.C."/>
            <person name="Ferro M.I.T."/>
            <person name="Formighieri E.F."/>
            <person name="Franco M.C."/>
            <person name="Greggio C.C."/>
            <person name="Gruber A."/>
            <person name="Katsuyama A.M."/>
            <person name="Kishi L.T."/>
            <person name="Leite R.P."/>
            <person name="Lemos E.G.M."/>
            <person name="Lemos M.V.F."/>
            <person name="Locali E.C."/>
            <person name="Machado M.A."/>
            <person name="Madeira A.M.B.N."/>
            <person name="Martinez-Rossi N.M."/>
            <person name="Martins E.C."/>
            <person name="Meidanis J."/>
            <person name="Menck C.F.M."/>
            <person name="Miyaki C.Y."/>
            <person name="Moon D.H."/>
            <person name="Moreira L.M."/>
            <person name="Novo M.T.M."/>
            <person name="Okura V.K."/>
            <person name="Oliveira M.C."/>
            <person name="Oliveira V.R."/>
            <person name="Pereira H.A."/>
            <person name="Rossi A."/>
            <person name="Sena J.A.D."/>
            <person name="Silva C."/>
            <person name="de Souza R.F."/>
            <person name="Spinola L.A.F."/>
            <person name="Takita M.A."/>
            <person name="Tamura R.E."/>
            <person name="Teixeira E.C."/>
            <person name="Tezza R.I.D."/>
            <person name="Trindade dos Santos M."/>
            <person name="Truffi D."/>
            <person name="Tsai S.M."/>
            <person name="White F.F."/>
            <person name="Setubal J.C."/>
            <person name="Kitajima J.P."/>
        </authorList>
    </citation>
    <scope>NUCLEOTIDE SEQUENCE [LARGE SCALE GENOMIC DNA]</scope>
    <source>
        <strain>306</strain>
    </source>
</reference>
<accession>Q8PHB5</accession>
<evidence type="ECO:0000305" key="1"/>
<organism>
    <name type="scientific">Xanthomonas axonopodis pv. citri (strain 306)</name>
    <dbReference type="NCBI Taxonomy" id="190486"/>
    <lineage>
        <taxon>Bacteria</taxon>
        <taxon>Pseudomonadati</taxon>
        <taxon>Pseudomonadota</taxon>
        <taxon>Gammaproteobacteria</taxon>
        <taxon>Lysobacterales</taxon>
        <taxon>Lysobacteraceae</taxon>
        <taxon>Xanthomonas</taxon>
    </lineage>
</organism>
<sequence>MSIEQLAETAQAMVAPGKGIIAIDESTSTIAKRFASVGIENIEENRRAYRELLLTTPKLSDYISGAILFDETIRQKTKDGVPFAEYMTAHGIIPGIKVDKGAQPLAGMPGELVTEGLDGLRARLEEYYTLGARFAKWRAVINIGEDIPSGTCIEANSHALARYAALCQEQGLVPMVEPEVIMDGSHDIETCYEVTEATLRSLFGALYEQNVVLEGTILKASMVISGKSCEEQASIEEVAESTVMCLKSTVPAILPGIVFLSGGQTDEQSTAHLNEMHQLGNLPWPLSFSYGRAMQQAALKLWAKDMTGNFAKAQQVIYERAKENGLAALGKWKG</sequence>
<feature type="chain" id="PRO_0000216915" description="Probable fructose-bisphosphate aldolase class 1">
    <location>
        <begin position="1"/>
        <end position="334"/>
    </location>
</feature>
<proteinExistence type="inferred from homology"/>